<protein>
    <recommendedName>
        <fullName>Ribonuclease pancreatic delta-type</fullName>
        <ecNumber>4.6.1.18</ecNumber>
    </recommendedName>
    <alternativeName>
        <fullName>RNase 1 delta</fullName>
    </alternativeName>
</protein>
<reference key="1">
    <citation type="journal article" date="2002" name="J. Mol. Evol.">
        <title>Pancreatic-type ribonuclease 1 gene duplications in rat species.</title>
        <authorList>
            <person name="Dubois J.-Y.F."/>
            <person name="Jekel P.A."/>
            <person name="Mulder P.P.M.F.A."/>
            <person name="Bussink A.P."/>
            <person name="Catzeflis F.M."/>
            <person name="Carsana A."/>
            <person name="Beintema J.J."/>
        </authorList>
    </citation>
    <scope>NUCLEOTIDE SEQUENCE [GENOMIC DNA]</scope>
</reference>
<organism>
    <name type="scientific">Rattus rattus</name>
    <name type="common">Black rat</name>
    <dbReference type="NCBI Taxonomy" id="10117"/>
    <lineage>
        <taxon>Eukaryota</taxon>
        <taxon>Metazoa</taxon>
        <taxon>Chordata</taxon>
        <taxon>Craniata</taxon>
        <taxon>Vertebrata</taxon>
        <taxon>Euteleostomi</taxon>
        <taxon>Mammalia</taxon>
        <taxon>Eutheria</taxon>
        <taxon>Euarchontoglires</taxon>
        <taxon>Glires</taxon>
        <taxon>Rodentia</taxon>
        <taxon>Myomorpha</taxon>
        <taxon>Muroidea</taxon>
        <taxon>Muridae</taxon>
        <taxon>Murinae</taxon>
        <taxon>Rattus</taxon>
    </lineage>
</organism>
<proteinExistence type="inferred from homology"/>
<keyword id="KW-1015">Disulfide bond</keyword>
<keyword id="KW-0255">Endonuclease</keyword>
<keyword id="KW-0378">Hydrolase</keyword>
<keyword id="KW-0456">Lyase</keyword>
<keyword id="KW-0540">Nuclease</keyword>
<keyword id="KW-0964">Secreted</keyword>
<keyword id="KW-0732">Signal</keyword>
<feature type="signal peptide" evidence="1">
    <location>
        <begin position="1"/>
        <end position="25"/>
    </location>
</feature>
<feature type="chain" id="PRO_0000234940" description="Ribonuclease pancreatic delta-type">
    <location>
        <begin position="26"/>
        <end position="150"/>
    </location>
</feature>
<feature type="active site" description="Proton acceptor" evidence="1">
    <location>
        <position position="37"/>
    </location>
</feature>
<feature type="active site" description="Proton donor" evidence="1">
    <location>
        <position position="145"/>
    </location>
</feature>
<feature type="binding site" evidence="1">
    <location>
        <position position="35"/>
    </location>
    <ligand>
        <name>substrate</name>
    </ligand>
</feature>
<feature type="binding site" evidence="1">
    <location>
        <begin position="66"/>
        <end position="70"/>
    </location>
    <ligand>
        <name>substrate</name>
    </ligand>
</feature>
<feature type="binding site" evidence="1">
    <location>
        <position position="91"/>
    </location>
    <ligand>
        <name>substrate</name>
    </ligand>
</feature>
<feature type="binding site" evidence="1">
    <location>
        <position position="111"/>
    </location>
    <ligand>
        <name>substrate</name>
    </ligand>
</feature>
<feature type="disulfide bond" evidence="1">
    <location>
        <begin position="51"/>
        <end position="110"/>
    </location>
</feature>
<feature type="disulfide bond" evidence="1">
    <location>
        <begin position="65"/>
        <end position="121"/>
    </location>
</feature>
<feature type="disulfide bond" evidence="1">
    <location>
        <begin position="83"/>
        <end position="136"/>
    </location>
</feature>
<comment type="function">
    <text evidence="1">Endonuclease that catalyzes the cleavage of RNA on the 3' side of pyrimidine nucleotides. Acts on single-stranded and double-stranded RNA (By similarity).</text>
</comment>
<comment type="catalytic activity">
    <reaction>
        <text>an [RNA] containing cytidine + H2O = an [RNA]-3'-cytidine-3'-phosphate + a 5'-hydroxy-ribonucleotide-3'-[RNA].</text>
        <dbReference type="EC" id="4.6.1.18"/>
    </reaction>
</comment>
<comment type="catalytic activity">
    <reaction>
        <text>an [RNA] containing uridine + H2O = an [RNA]-3'-uridine-3'-phosphate + a 5'-hydroxy-ribonucleotide-3'-[RNA].</text>
        <dbReference type="EC" id="4.6.1.18"/>
    </reaction>
</comment>
<comment type="subunit">
    <text evidence="1">Monomer.</text>
</comment>
<comment type="subcellular location">
    <subcellularLocation>
        <location evidence="1">Secreted</location>
    </subcellularLocation>
</comment>
<comment type="similarity">
    <text evidence="2">Belongs to the pancreatic ribonuclease family.</text>
</comment>
<evidence type="ECO:0000250" key="1"/>
<evidence type="ECO:0000305" key="2"/>
<dbReference type="EC" id="4.6.1.18"/>
<dbReference type="EMBL" id="AJ315463">
    <property type="protein sequence ID" value="CAC86444.1"/>
    <property type="molecule type" value="Genomic_DNA"/>
</dbReference>
<dbReference type="SMR" id="Q8VD86"/>
<dbReference type="GO" id="GO:0005576">
    <property type="term" value="C:extracellular region"/>
    <property type="evidence" value="ECO:0007669"/>
    <property type="project" value="UniProtKB-SubCell"/>
</dbReference>
<dbReference type="GO" id="GO:0016829">
    <property type="term" value="F:lyase activity"/>
    <property type="evidence" value="ECO:0007669"/>
    <property type="project" value="UniProtKB-KW"/>
</dbReference>
<dbReference type="GO" id="GO:0003676">
    <property type="term" value="F:nucleic acid binding"/>
    <property type="evidence" value="ECO:0007669"/>
    <property type="project" value="InterPro"/>
</dbReference>
<dbReference type="GO" id="GO:0004522">
    <property type="term" value="F:ribonuclease A activity"/>
    <property type="evidence" value="ECO:0007669"/>
    <property type="project" value="UniProtKB-EC"/>
</dbReference>
<dbReference type="GO" id="GO:0050830">
    <property type="term" value="P:defense response to Gram-positive bacterium"/>
    <property type="evidence" value="ECO:0007669"/>
    <property type="project" value="TreeGrafter"/>
</dbReference>
<dbReference type="CDD" id="cd06265">
    <property type="entry name" value="RNase_A_canonical"/>
    <property type="match status" value="1"/>
</dbReference>
<dbReference type="FunFam" id="3.10.130.10:FF:000001">
    <property type="entry name" value="Ribonuclease pancreatic"/>
    <property type="match status" value="1"/>
</dbReference>
<dbReference type="Gene3D" id="3.10.130.10">
    <property type="entry name" value="Ribonuclease A-like domain"/>
    <property type="match status" value="1"/>
</dbReference>
<dbReference type="InterPro" id="IPR001427">
    <property type="entry name" value="RNaseA"/>
</dbReference>
<dbReference type="InterPro" id="IPR036816">
    <property type="entry name" value="RNaseA-like_dom_sf"/>
</dbReference>
<dbReference type="InterPro" id="IPR023411">
    <property type="entry name" value="RNaseA_AS"/>
</dbReference>
<dbReference type="InterPro" id="IPR023412">
    <property type="entry name" value="RNaseA_domain"/>
</dbReference>
<dbReference type="PANTHER" id="PTHR11437">
    <property type="entry name" value="RIBONUCLEASE"/>
    <property type="match status" value="1"/>
</dbReference>
<dbReference type="PANTHER" id="PTHR11437:SF24">
    <property type="entry name" value="RIBONUCLEASE PANCREATIC"/>
    <property type="match status" value="1"/>
</dbReference>
<dbReference type="Pfam" id="PF00074">
    <property type="entry name" value="RnaseA"/>
    <property type="match status" value="1"/>
</dbReference>
<dbReference type="PRINTS" id="PR00794">
    <property type="entry name" value="RIBONUCLEASE"/>
</dbReference>
<dbReference type="SMART" id="SM00092">
    <property type="entry name" value="RNAse_Pc"/>
    <property type="match status" value="1"/>
</dbReference>
<dbReference type="SUPFAM" id="SSF54076">
    <property type="entry name" value="RNase A-like"/>
    <property type="match status" value="1"/>
</dbReference>
<dbReference type="PROSITE" id="PS00127">
    <property type="entry name" value="RNASE_PANCREATIC"/>
    <property type="match status" value="1"/>
</dbReference>
<sequence length="150" mass="16993">MGLEKSFILFSLLVLVLGWVQPSLGRKPSVQDFKRQHMDPGSSPNSRPTYCNQMMKRRGMTKGSCKRVNTFLHESWAKVQAICSQRQMTRKTSSKKNCHKSSSPLHITECRLKGSSKYPKCDYTTTNSQKHIIIACEGNPLVPVHLDARV</sequence>
<name>RNS1D_RATRT</name>
<accession>Q8VD86</accession>